<sequence>MAKTNSINNAAYDQLNKDADRILQLIKVQMDNLTLPQCPLYEEVLDTQMFGLQKEVDFAANLGLIDIEMGKEIMLRLEKELSKLHEAFTNV</sequence>
<dbReference type="EMBL" id="AM295250">
    <property type="protein sequence ID" value="CAL27648.1"/>
    <property type="molecule type" value="Genomic_DNA"/>
</dbReference>
<dbReference type="RefSeq" id="WP_015899990.1">
    <property type="nucleotide sequence ID" value="NC_012121.1"/>
</dbReference>
<dbReference type="SMR" id="B9DPV5"/>
<dbReference type="KEGG" id="sca:SCA_0738"/>
<dbReference type="eggNOG" id="COG4838">
    <property type="taxonomic scope" value="Bacteria"/>
</dbReference>
<dbReference type="HOGENOM" id="CLU_160493_1_0_9"/>
<dbReference type="OrthoDB" id="2135235at2"/>
<dbReference type="BioCyc" id="SCAR396513:SCA_RS03740-MONOMER"/>
<dbReference type="Proteomes" id="UP000000444">
    <property type="component" value="Chromosome"/>
</dbReference>
<dbReference type="Gene3D" id="1.10.287.750">
    <property type="entry name" value="SO2669-like"/>
    <property type="match status" value="1"/>
</dbReference>
<dbReference type="HAMAP" id="MF_01560">
    <property type="entry name" value="UPF0358"/>
    <property type="match status" value="1"/>
</dbReference>
<dbReference type="InterPro" id="IPR009983">
    <property type="entry name" value="UPF0358"/>
</dbReference>
<dbReference type="InterPro" id="IPR036270">
    <property type="entry name" value="UPF0358_sf"/>
</dbReference>
<dbReference type="NCBIfam" id="NF010187">
    <property type="entry name" value="PRK13666.1"/>
    <property type="match status" value="1"/>
</dbReference>
<dbReference type="Pfam" id="PF07408">
    <property type="entry name" value="DUF1507"/>
    <property type="match status" value="1"/>
</dbReference>
<dbReference type="SUPFAM" id="SSF140404">
    <property type="entry name" value="EF2458-like"/>
    <property type="match status" value="1"/>
</dbReference>
<evidence type="ECO:0000255" key="1">
    <source>
        <dbReference type="HAMAP-Rule" id="MF_01560"/>
    </source>
</evidence>
<accession>B9DPV5</accession>
<comment type="similarity">
    <text evidence="1">Belongs to the UPF0358 family.</text>
</comment>
<organism>
    <name type="scientific">Staphylococcus carnosus (strain TM300)</name>
    <dbReference type="NCBI Taxonomy" id="396513"/>
    <lineage>
        <taxon>Bacteria</taxon>
        <taxon>Bacillati</taxon>
        <taxon>Bacillota</taxon>
        <taxon>Bacilli</taxon>
        <taxon>Bacillales</taxon>
        <taxon>Staphylococcaceae</taxon>
        <taxon>Staphylococcus</taxon>
    </lineage>
</organism>
<keyword id="KW-1185">Reference proteome</keyword>
<reference key="1">
    <citation type="journal article" date="2009" name="Appl. Environ. Microbiol.">
        <title>Genome analysis of the meat starter culture bacterium Staphylococcus carnosus TM300.</title>
        <authorList>
            <person name="Rosenstein R."/>
            <person name="Nerz C."/>
            <person name="Biswas L."/>
            <person name="Resch A."/>
            <person name="Raddatz G."/>
            <person name="Schuster S.C."/>
            <person name="Goetz F."/>
        </authorList>
    </citation>
    <scope>NUCLEOTIDE SEQUENCE [LARGE SCALE GENOMIC DNA]</scope>
    <source>
        <strain>TM300</strain>
    </source>
</reference>
<feature type="chain" id="PRO_1000185429" description="UPF0358 protein Sca_0738">
    <location>
        <begin position="1"/>
        <end position="91"/>
    </location>
</feature>
<name>Y738_STACT</name>
<gene>
    <name type="ordered locus">Sca_0738</name>
</gene>
<protein>
    <recommendedName>
        <fullName evidence="1">UPF0358 protein Sca_0738</fullName>
    </recommendedName>
</protein>
<proteinExistence type="inferred from homology"/>